<name>FAAA_BOVIN</name>
<proteinExistence type="evidence at transcript level"/>
<reference key="1">
    <citation type="submission" date="2007-08" db="EMBL/GenBank/DDBJ databases">
        <authorList>
            <consortium name="NIH - Mammalian Gene Collection (MGC) project"/>
        </authorList>
    </citation>
    <scope>NUCLEOTIDE SEQUENCE [LARGE SCALE MRNA]</scope>
    <source>
        <strain>Hereford</strain>
        <tissue>Ascending colon</tissue>
        <tissue>Fetal liver</tissue>
        <tissue>Fetal muscle</tissue>
    </source>
</reference>
<organism>
    <name type="scientific">Bos taurus</name>
    <name type="common">Bovine</name>
    <dbReference type="NCBI Taxonomy" id="9913"/>
    <lineage>
        <taxon>Eukaryota</taxon>
        <taxon>Metazoa</taxon>
        <taxon>Chordata</taxon>
        <taxon>Craniata</taxon>
        <taxon>Vertebrata</taxon>
        <taxon>Euteleostomi</taxon>
        <taxon>Mammalia</taxon>
        <taxon>Eutheria</taxon>
        <taxon>Laurasiatheria</taxon>
        <taxon>Artiodactyla</taxon>
        <taxon>Ruminantia</taxon>
        <taxon>Pecora</taxon>
        <taxon>Bovidae</taxon>
        <taxon>Bovinae</taxon>
        <taxon>Bos</taxon>
    </lineage>
</organism>
<accession>A5PKH3</accession>
<accession>A7MBC9</accession>
<dbReference type="EC" id="3.7.1.2" evidence="3"/>
<dbReference type="EMBL" id="BC142487">
    <property type="protein sequence ID" value="AAI42488.1"/>
    <property type="molecule type" value="mRNA"/>
</dbReference>
<dbReference type="EMBL" id="BC151490">
    <property type="protein sequence ID" value="AAI51491.1"/>
    <property type="molecule type" value="mRNA"/>
</dbReference>
<dbReference type="EMBL" id="BC151824">
    <property type="protein sequence ID" value="AAI51825.1"/>
    <property type="molecule type" value="mRNA"/>
</dbReference>
<dbReference type="RefSeq" id="NP_001092382.1">
    <property type="nucleotide sequence ID" value="NM_001098912.1"/>
</dbReference>
<dbReference type="SMR" id="A5PKH3"/>
<dbReference type="FunCoup" id="A5PKH3">
    <property type="interactions" value="1547"/>
</dbReference>
<dbReference type="STRING" id="9913.ENSBTAP00000073849"/>
<dbReference type="PaxDb" id="9913-ENSBTAP00000016368"/>
<dbReference type="PeptideAtlas" id="A5PKH3"/>
<dbReference type="GeneID" id="508724"/>
<dbReference type="KEGG" id="bta:508724"/>
<dbReference type="CTD" id="2184"/>
<dbReference type="eggNOG" id="KOG2843">
    <property type="taxonomic scope" value="Eukaryota"/>
</dbReference>
<dbReference type="InParanoid" id="A5PKH3"/>
<dbReference type="OrthoDB" id="9971669at2759"/>
<dbReference type="UniPathway" id="UPA00139">
    <property type="reaction ID" value="UER00341"/>
</dbReference>
<dbReference type="Proteomes" id="UP000009136">
    <property type="component" value="Unplaced"/>
</dbReference>
<dbReference type="GO" id="GO:0004334">
    <property type="term" value="F:fumarylacetoacetase activity"/>
    <property type="evidence" value="ECO:0000318"/>
    <property type="project" value="GO_Central"/>
</dbReference>
<dbReference type="GO" id="GO:0046872">
    <property type="term" value="F:metal ion binding"/>
    <property type="evidence" value="ECO:0007669"/>
    <property type="project" value="UniProtKB-KW"/>
</dbReference>
<dbReference type="GO" id="GO:1902000">
    <property type="term" value="P:homogentisate catabolic process"/>
    <property type="evidence" value="ECO:0000318"/>
    <property type="project" value="GO_Central"/>
</dbReference>
<dbReference type="GO" id="GO:0006559">
    <property type="term" value="P:L-phenylalanine catabolic process"/>
    <property type="evidence" value="ECO:0000318"/>
    <property type="project" value="GO_Central"/>
</dbReference>
<dbReference type="GO" id="GO:0006629">
    <property type="term" value="P:lipid metabolic process"/>
    <property type="evidence" value="ECO:0007669"/>
    <property type="project" value="UniProtKB-KW"/>
</dbReference>
<dbReference type="GO" id="GO:0006572">
    <property type="term" value="P:tyrosine catabolic process"/>
    <property type="evidence" value="ECO:0000318"/>
    <property type="project" value="GO_Central"/>
</dbReference>
<dbReference type="FunFam" id="2.30.30.230:FF:000001">
    <property type="entry name" value="Fumarylacetoacetase"/>
    <property type="match status" value="1"/>
</dbReference>
<dbReference type="FunFam" id="3.90.850.10:FF:000004">
    <property type="entry name" value="Fumarylacetoacetase"/>
    <property type="match status" value="1"/>
</dbReference>
<dbReference type="Gene3D" id="2.30.30.230">
    <property type="entry name" value="Fumarylacetoacetase, N-terminal domain"/>
    <property type="match status" value="1"/>
</dbReference>
<dbReference type="Gene3D" id="3.90.850.10">
    <property type="entry name" value="Fumarylacetoacetase-like, C-terminal domain"/>
    <property type="match status" value="1"/>
</dbReference>
<dbReference type="InterPro" id="IPR005959">
    <property type="entry name" value="Fumarylacetoacetase"/>
</dbReference>
<dbReference type="InterPro" id="IPR011234">
    <property type="entry name" value="Fumarylacetoacetase-like_C"/>
</dbReference>
<dbReference type="InterPro" id="IPR036663">
    <property type="entry name" value="Fumarylacetoacetase_C_sf"/>
</dbReference>
<dbReference type="InterPro" id="IPR015377">
    <property type="entry name" value="Fumarylacetoacetase_N"/>
</dbReference>
<dbReference type="InterPro" id="IPR036462">
    <property type="entry name" value="Fumarylacetoacetase_N_sf"/>
</dbReference>
<dbReference type="NCBIfam" id="TIGR01266">
    <property type="entry name" value="fum_ac_acetase"/>
    <property type="match status" value="1"/>
</dbReference>
<dbReference type="PANTHER" id="PTHR43069">
    <property type="entry name" value="FUMARYLACETOACETASE"/>
    <property type="match status" value="1"/>
</dbReference>
<dbReference type="PANTHER" id="PTHR43069:SF2">
    <property type="entry name" value="FUMARYLACETOACETASE"/>
    <property type="match status" value="1"/>
</dbReference>
<dbReference type="Pfam" id="PF01557">
    <property type="entry name" value="FAA_hydrolase"/>
    <property type="match status" value="1"/>
</dbReference>
<dbReference type="Pfam" id="PF09298">
    <property type="entry name" value="FAA_hydrolase_N"/>
    <property type="match status" value="1"/>
</dbReference>
<dbReference type="SUPFAM" id="SSF56529">
    <property type="entry name" value="FAH"/>
    <property type="match status" value="1"/>
</dbReference>
<dbReference type="SUPFAM" id="SSF63433">
    <property type="entry name" value="Fumarylacetoacetate hydrolase, FAH, N-terminal domain"/>
    <property type="match status" value="1"/>
</dbReference>
<evidence type="ECO:0000250" key="1">
    <source>
        <dbReference type="UniProtKB" id="P16930"/>
    </source>
</evidence>
<evidence type="ECO:0000250" key="2">
    <source>
        <dbReference type="UniProtKB" id="P25093"/>
    </source>
</evidence>
<evidence type="ECO:0000250" key="3">
    <source>
        <dbReference type="UniProtKB" id="P35505"/>
    </source>
</evidence>
<evidence type="ECO:0000305" key="4"/>
<gene>
    <name type="primary">FAH</name>
</gene>
<feature type="initiator methionine" description="Removed" evidence="1">
    <location>
        <position position="1"/>
    </location>
</feature>
<feature type="chain" id="PRO_0000318804" description="Fumarylacetoacetase">
    <location>
        <begin position="2"/>
        <end position="419"/>
    </location>
</feature>
<feature type="active site" description="Proton acceptor" evidence="4">
    <location>
        <position position="133"/>
    </location>
</feature>
<feature type="binding site" evidence="3">
    <location>
        <position position="126"/>
    </location>
    <ligand>
        <name>Ca(2+)</name>
        <dbReference type="ChEBI" id="CHEBI:29108"/>
    </ligand>
</feature>
<feature type="binding site" evidence="3">
    <location>
        <position position="128"/>
    </location>
    <ligand>
        <name>substrate</name>
    </ligand>
</feature>
<feature type="binding site" evidence="3">
    <location>
        <position position="142"/>
    </location>
    <ligand>
        <name>substrate</name>
    </ligand>
</feature>
<feature type="binding site" evidence="3">
    <location>
        <position position="199"/>
    </location>
    <ligand>
        <name>Ca(2+)</name>
        <dbReference type="ChEBI" id="CHEBI:29108"/>
    </ligand>
</feature>
<feature type="binding site" evidence="3">
    <location>
        <position position="201"/>
    </location>
    <ligand>
        <name>Ca(2+)</name>
        <dbReference type="ChEBI" id="CHEBI:29108"/>
    </ligand>
</feature>
<feature type="binding site" evidence="3">
    <location>
        <position position="233"/>
    </location>
    <ligand>
        <name>Ca(2+)</name>
        <dbReference type="ChEBI" id="CHEBI:29108"/>
    </ligand>
</feature>
<feature type="binding site" evidence="3">
    <location>
        <position position="233"/>
    </location>
    <ligand>
        <name>Mg(2+)</name>
        <dbReference type="ChEBI" id="CHEBI:18420"/>
    </ligand>
</feature>
<feature type="binding site" evidence="3">
    <location>
        <position position="240"/>
    </location>
    <ligand>
        <name>substrate</name>
    </ligand>
</feature>
<feature type="binding site" evidence="3">
    <location>
        <position position="244"/>
    </location>
    <ligand>
        <name>substrate</name>
    </ligand>
</feature>
<feature type="binding site" evidence="3">
    <location>
        <position position="253"/>
    </location>
    <ligand>
        <name>Mg(2+)</name>
        <dbReference type="ChEBI" id="CHEBI:18420"/>
    </ligand>
</feature>
<feature type="binding site" evidence="3">
    <location>
        <position position="257"/>
    </location>
    <ligand>
        <name>Mg(2+)</name>
        <dbReference type="ChEBI" id="CHEBI:18420"/>
    </ligand>
</feature>
<feature type="binding site" evidence="3">
    <location>
        <position position="350"/>
    </location>
    <ligand>
        <name>substrate</name>
    </ligand>
</feature>
<feature type="modified residue" description="N-acetylserine" evidence="1">
    <location>
        <position position="2"/>
    </location>
</feature>
<feature type="modified residue" description="Phosphoserine" evidence="3">
    <location>
        <position position="92"/>
    </location>
</feature>
<feature type="modified residue" description="Phosphoserine" evidence="1">
    <location>
        <position position="309"/>
    </location>
</feature>
<feature type="modified residue" description="Phosphoserine" evidence="2">
    <location>
        <position position="417"/>
    </location>
</feature>
<feature type="sequence conflict" description="In Ref. 1; AAI51491." evidence="4" ref="1">
    <original>H</original>
    <variation>D</variation>
    <location>
        <position position="332"/>
    </location>
</feature>
<keyword id="KW-0007">Acetylation</keyword>
<keyword id="KW-0106">Calcium</keyword>
<keyword id="KW-0378">Hydrolase</keyword>
<keyword id="KW-0443">Lipid metabolism</keyword>
<keyword id="KW-0460">Magnesium</keyword>
<keyword id="KW-0479">Metal-binding</keyword>
<keyword id="KW-0585">Phenylalanine catabolism</keyword>
<keyword id="KW-0597">Phosphoprotein</keyword>
<keyword id="KW-1185">Reference proteome</keyword>
<keyword id="KW-0828">Tyrosine catabolism</keyword>
<protein>
    <recommendedName>
        <fullName>Fumarylacetoacetase</fullName>
        <shortName>FAA</shortName>
        <ecNumber evidence="3">3.7.1.2</ecNumber>
    </recommendedName>
    <alternativeName>
        <fullName>Beta-diketonase</fullName>
    </alternativeName>
    <alternativeName>
        <fullName>Fumarylacetoacetate hydrolase</fullName>
    </alternativeName>
</protein>
<sequence>MSFVPVAEDSDFPIHNLPYGVFSTRGNPRPRIGVAIGDQILDLSVIKHLFTGPILSGHQDVFNKPTLNSFMGLGQAAWKEARAFLQNLLSASQARLRDDVELRQRAFTSQASATMYLPATIGDYTDFYSSRHHATNVGVMFRGKENALMPNWLHLPVGYHGRASSVVVSGTPIRRPLGQMRPDDSKPPVYGACKLLDFELEMAFFVGPGNKLGEPIPISKAHEHIFGMVLMNDWSARDIQKWEYVPLGPFLGKSFGTTISPWVVPMDALMPFAVSNPEQDPKPLPYLCHDQPYTFDINLSVALKGEGMSQAATICRSNFKYMYWTMLQQLTHHSVNGCNLQPGDLLASGTISGPEPESFGCMLELSWKGTRAVELGNGQTRKFLLDGDEVIMTGHCQGDGYRIGFGQCAGKVLPALSFA</sequence>
<comment type="catalytic activity">
    <reaction evidence="3">
        <text>4-fumarylacetoacetate + H2O = acetoacetate + fumarate + H(+)</text>
        <dbReference type="Rhea" id="RHEA:10244"/>
        <dbReference type="ChEBI" id="CHEBI:13705"/>
        <dbReference type="ChEBI" id="CHEBI:15377"/>
        <dbReference type="ChEBI" id="CHEBI:15378"/>
        <dbReference type="ChEBI" id="CHEBI:18034"/>
        <dbReference type="ChEBI" id="CHEBI:29806"/>
        <dbReference type="EC" id="3.7.1.2"/>
    </reaction>
</comment>
<comment type="cofactor">
    <cofactor evidence="3">
        <name>Ca(2+)</name>
        <dbReference type="ChEBI" id="CHEBI:29108"/>
    </cofactor>
</comment>
<comment type="cofactor">
    <cofactor evidence="3">
        <name>Mg(2+)</name>
        <dbReference type="ChEBI" id="CHEBI:18420"/>
    </cofactor>
</comment>
<comment type="pathway">
    <text>Amino-acid degradation; L-phenylalanine degradation; acetoacetate and fumarate from L-phenylalanine: step 6/6.</text>
</comment>
<comment type="subunit">
    <text evidence="3">Homodimer.</text>
</comment>
<comment type="similarity">
    <text evidence="4">Belongs to the FAH family.</text>
</comment>